<protein>
    <recommendedName>
        <fullName>Propanediol dehydratase small subunit</fullName>
        <ecNumber evidence="8">4.2.1.28</ecNumber>
    </recommendedName>
    <alternativeName>
        <fullName>Diol dehydratase small subunit</fullName>
        <shortName>DDH small subunit</shortName>
    </alternativeName>
    <alternativeName>
        <fullName>Propanediol utilization protein PduE</fullName>
    </alternativeName>
</protein>
<reference key="1">
    <citation type="journal article" date="1997" name="J. Bacteriol.">
        <title>Propanediol utilization genes (pdu) of Salmonella typhimurium: three genes for the propanediol dehydratase.</title>
        <authorList>
            <person name="Bobik T.A."/>
            <person name="Xu Y."/>
            <person name="Jeter R.M."/>
            <person name="Otto K.E."/>
            <person name="Roth J.R."/>
        </authorList>
    </citation>
    <scope>NUCLEOTIDE SEQUENCE [GENOMIC DNA]</scope>
    <scope>FUNCTION</scope>
    <scope>CATALYTIC ACTIVITY</scope>
    <scope>SUBUNIT</scope>
    <source>
        <strain>LT2</strain>
    </source>
</reference>
<reference key="2">
    <citation type="journal article" date="1999" name="J. Bacteriol.">
        <title>The propanediol utilization (pdu) operon of Salmonella enterica serovar typhimurium LT2 includes genes necessary for formation of polyhedral organelles involved in coenzyme B(12)-dependent 1, 2-propanediol degradation.</title>
        <authorList>
            <person name="Bobik T.A."/>
            <person name="Havemann G.D."/>
            <person name="Busch R.J."/>
            <person name="Williams D.S."/>
            <person name="Aldrich H.C."/>
        </authorList>
    </citation>
    <scope>NUCLEOTIDE SEQUENCE [GENOMIC DNA]</scope>
    <scope>PATHWAY</scope>
    <scope>SUBCELLULAR LOCATION</scope>
    <scope>INDUCTION</scope>
    <source>
        <strain>LT2</strain>
    </source>
</reference>
<reference key="3">
    <citation type="journal article" date="2001" name="Nature">
        <title>Complete genome sequence of Salmonella enterica serovar Typhimurium LT2.</title>
        <authorList>
            <person name="McClelland M."/>
            <person name="Sanderson K.E."/>
            <person name="Spieth J."/>
            <person name="Clifton S.W."/>
            <person name="Latreille P."/>
            <person name="Courtney L."/>
            <person name="Porwollik S."/>
            <person name="Ali J."/>
            <person name="Dante M."/>
            <person name="Du F."/>
            <person name="Hou S."/>
            <person name="Layman D."/>
            <person name="Leonard S."/>
            <person name="Nguyen C."/>
            <person name="Scott K."/>
            <person name="Holmes A."/>
            <person name="Grewal N."/>
            <person name="Mulvaney E."/>
            <person name="Ryan E."/>
            <person name="Sun H."/>
            <person name="Florea L."/>
            <person name="Miller W."/>
            <person name="Stoneking T."/>
            <person name="Nhan M."/>
            <person name="Waterston R."/>
            <person name="Wilson R.K."/>
        </authorList>
    </citation>
    <scope>NUCLEOTIDE SEQUENCE [LARGE SCALE GENOMIC DNA]</scope>
    <source>
        <strain>LT2 / SGSC1412 / ATCC 700720</strain>
    </source>
</reference>
<reference key="4">
    <citation type="journal article" date="2003" name="J. Bacteriol.">
        <title>Protein content of polyhedral organelles involved in coenzyme B12-dependent degradation of 1,2-propanediol in Salmonella enterica serovar Typhimurium LT2.</title>
        <authorList>
            <person name="Havemann G.D."/>
            <person name="Bobik T.A."/>
        </authorList>
    </citation>
    <scope>PROTEIN SEQUENCE OF 1-7</scope>
    <scope>SUBCELLULAR LOCATION</scope>
    <source>
        <strain>LT2</strain>
    </source>
</reference>
<reference key="5">
    <citation type="journal article" date="1990" name="J. Gen. Microbiol.">
        <title>Cobalamin-dependent 1,2-propanediol utilization by Salmonella typhimurium.</title>
        <authorList>
            <person name="Jeter R.M."/>
        </authorList>
    </citation>
    <scope>COFACTOR</scope>
</reference>
<reference key="6">
    <citation type="journal article" date="1992" name="J. Bacteriol.">
        <title>A single regulatory gene integrates control of vitamin B12 synthesis and propanediol degradation.</title>
        <authorList>
            <person name="Bobik T.A."/>
            <person name="Ailion M."/>
            <person name="Roth J.R."/>
        </authorList>
    </citation>
    <scope>INDUCTION</scope>
</reference>
<reference key="7">
    <citation type="journal article" date="2002" name="J. Bacteriol.">
        <title>PduA is a shell protein of polyhedral organelles involved in coenzyme B(12)-dependent degradation of 1,2-propanediol in Salmonella enterica serovar typhimurium LT2.</title>
        <authorList>
            <person name="Havemann G.D."/>
            <person name="Sampson E.M."/>
            <person name="Bobik T.A."/>
        </authorList>
    </citation>
    <scope>SUBCELLULAR LOCATION</scope>
    <source>
        <strain>LT2</strain>
    </source>
</reference>
<reference key="8">
    <citation type="journal article" date="2006" name="J. Bacteriol.">
        <title>Conserving a volatile metabolite: a role for carboxysome-like organelles in Salmonella enterica.</title>
        <authorList>
            <person name="Penrod J.T."/>
            <person name="Roth J.R."/>
        </authorList>
    </citation>
    <scope>DISRUPTION PHENOTYPE</scope>
    <source>
        <strain>LT2</strain>
    </source>
</reference>
<reference key="9">
    <citation type="journal article" date="2011" name="J. Bacteriol.">
        <title>The N-terminal region of the medium subunit (PduD) packages adenosylcobalamin-dependent diol dehydratase (PduCDE) into the Pdu microcompartment.</title>
        <authorList>
            <person name="Fan C."/>
            <person name="Bobik T.A."/>
        </authorList>
    </citation>
    <scope>SUBCELLULAR LOCATION</scope>
    <scope>MUTAGENESIS OF 2-ASN--SER-35</scope>
    <source>
        <strain>LT2</strain>
    </source>
</reference>
<reference key="10">
    <citation type="journal article" date="2015" name="Proc. Natl. Acad. Sci. U.S.A.">
        <title>Selective molecular transport through the protein shell of a bacterial microcompartment organelle.</title>
        <authorList>
            <person name="Chowdhury C."/>
            <person name="Chun S."/>
            <person name="Pang A."/>
            <person name="Sawaya M.R."/>
            <person name="Sinha S."/>
            <person name="Yeates T.O."/>
            <person name="Bobik T.A."/>
        </authorList>
    </citation>
    <scope>ACTIVITY REGULATION</scope>
    <source>
        <strain>LT2</strain>
    </source>
</reference>
<reference key="11">
    <citation type="journal article" date="2017" name="PLoS Comput. Biol.">
        <title>A systems-level model reveals that 1,2-Propanediol utilization microcompartments enhance pathway flux through intermediate sequestration.</title>
        <authorList>
            <person name="Jakobson C.M."/>
            <person name="Tullman-Ercek D."/>
            <person name="Slininger M.F."/>
            <person name="Mangan N.M."/>
        </authorList>
    </citation>
    <scope>SYSTEM-MODELING</scope>
    <scope>FUNCTION</scope>
    <source>
        <strain>LT2</strain>
    </source>
</reference>
<sequence>MNTDAIESMVRDVLSRMNSLQGDAPAAAPAAGGTSRSAKVSDYPLANKHPEWVKTATNKTLDDFTLENVLSNKVTAQDMRITPETLRLQASIAKDAGRDRLAMNFERAAELTAVPDDRILEIYNALRPYRSTKEELLAIADDLENRYQAKICAAFVREAAGLYVERKKLKGDD</sequence>
<name>PDUE_SALTY</name>
<accession>O31042</accession>
<accession>Q7BV83</accession>
<comment type="function">
    <text evidence="14">Part of the PduCDE complex that catalyzes the dehydration of 1,2-propanediol (1,2-PD) to propionaldehyde. Required for S.typhimurium growth on 1,2-PD as the sole carbon and energy source. Localized in the bacterial microcompartment (BMC) dedicated to 1,2-PD degradation.</text>
</comment>
<comment type="function">
    <text evidence="8 13">The 1,2-PD-specific bacterial microcompartment (BMC) concentrates low levels of 1,2-PD catabolic enzymes, concentrates volatile reaction intermediates thus enhancing pathway flux and keeps the level of toxic, mutagenic propionaldehyde low.</text>
</comment>
<comment type="catalytic activity">
    <reaction evidence="9">
        <text>propane-1,2-diol = propanal + H2O</text>
        <dbReference type="Rhea" id="RHEA:14569"/>
        <dbReference type="ChEBI" id="CHEBI:15377"/>
        <dbReference type="ChEBI" id="CHEBI:16997"/>
        <dbReference type="ChEBI" id="CHEBI:17153"/>
        <dbReference type="EC" id="4.2.1.28"/>
    </reaction>
</comment>
<comment type="cofactor">
    <cofactor evidence="6">
        <name>adenosylcob(III)alamin</name>
        <dbReference type="ChEBI" id="CHEBI:18408"/>
    </cofactor>
</comment>
<comment type="activity regulation">
    <text evidence="8">Inhibited by glycerol.</text>
</comment>
<comment type="pathway">
    <text evidence="12">Polyol metabolism; 1,2-propanediol degradation.</text>
</comment>
<comment type="subunit">
    <text evidence="9">The propanediol dehydratase enzyme is a heterotrimeric complex composed of a large (PduC), a medium (PduD) and a small (PduE) subunit.</text>
</comment>
<comment type="subcellular location">
    <subcellularLocation>
        <location evidence="1 2 3 7">Bacterial microcompartment</location>
    </subcellularLocation>
    <text evidence="1">Probably located inside the BMC shell.</text>
</comment>
<comment type="induction">
    <text evidence="1 4">BMC production is induced by growth on 1,2-PD vitamin B12 medium (PubMed:10498708). By either propanediol or glycerol.</text>
</comment>
<comment type="disruption phenotype">
    <text evidence="5">A triple pduC-pduD-pduE deletion releases no acetaldehyde when grown on propanediol.</text>
</comment>
<comment type="miscellaneous">
    <text evidence="1 3">Bacterial microcompartments (BMC) 100-200 nm in cross section are formed during aerobic growth on minimal 1,2-PD-B12 or anaerobic growth on 1,2-PD-tetrathionate medium, but not during aerobic growth on glucose, anerobic growth on glucose or pyruvate-tetrathionate (PubMed:10498708). BMCs can constitute up to 10% of total cell protein (PubMed:12923081).</text>
</comment>
<comment type="similarity">
    <text evidence="11">Belongs to the diol/glycerol dehydratase small subunit family.</text>
</comment>
<organism>
    <name type="scientific">Salmonella typhimurium (strain LT2 / SGSC1412 / ATCC 700720)</name>
    <dbReference type="NCBI Taxonomy" id="99287"/>
    <lineage>
        <taxon>Bacteria</taxon>
        <taxon>Pseudomonadati</taxon>
        <taxon>Pseudomonadota</taxon>
        <taxon>Gammaproteobacteria</taxon>
        <taxon>Enterobacterales</taxon>
        <taxon>Enterobacteriaceae</taxon>
        <taxon>Salmonella</taxon>
    </lineage>
</organism>
<evidence type="ECO:0000269" key="1">
    <source>
    </source>
</evidence>
<evidence type="ECO:0000269" key="2">
    <source>
    </source>
</evidence>
<evidence type="ECO:0000269" key="3">
    <source>
    </source>
</evidence>
<evidence type="ECO:0000269" key="4">
    <source>
    </source>
</evidence>
<evidence type="ECO:0000269" key="5">
    <source>
    </source>
</evidence>
<evidence type="ECO:0000269" key="6">
    <source>
    </source>
</evidence>
<evidence type="ECO:0000269" key="7">
    <source>
    </source>
</evidence>
<evidence type="ECO:0000269" key="8">
    <source>
    </source>
</evidence>
<evidence type="ECO:0000269" key="9">
    <source>
    </source>
</evidence>
<evidence type="ECO:0000303" key="10">
    <source>
    </source>
</evidence>
<evidence type="ECO:0000305" key="11"/>
<evidence type="ECO:0000305" key="12">
    <source>
    </source>
</evidence>
<evidence type="ECO:0000305" key="13">
    <source>
    </source>
</evidence>
<evidence type="ECO:0000305" key="14">
    <source>
    </source>
</evidence>
<dbReference type="EC" id="4.2.1.28" evidence="8"/>
<dbReference type="EMBL" id="AF026270">
    <property type="protein sequence ID" value="AAB84104.1"/>
    <property type="molecule type" value="Genomic_DNA"/>
</dbReference>
<dbReference type="EMBL" id="AE006468">
    <property type="protein sequence ID" value="AAL20946.1"/>
    <property type="molecule type" value="Genomic_DNA"/>
</dbReference>
<dbReference type="RefSeq" id="NP_460987.1">
    <property type="nucleotide sequence ID" value="NC_003197.2"/>
</dbReference>
<dbReference type="RefSeq" id="WP_001090597.1">
    <property type="nucleotide sequence ID" value="NC_003197.2"/>
</dbReference>
<dbReference type="SMR" id="O31042"/>
<dbReference type="STRING" id="99287.STM2042"/>
<dbReference type="PaxDb" id="99287-STM2042"/>
<dbReference type="GeneID" id="1253563"/>
<dbReference type="KEGG" id="stm:STM2042"/>
<dbReference type="PATRIC" id="fig|99287.12.peg.2164"/>
<dbReference type="HOGENOM" id="CLU_120853_0_0_6"/>
<dbReference type="OMA" id="KIMAQMG"/>
<dbReference type="PhylomeDB" id="O31042"/>
<dbReference type="BioCyc" id="MetaCyc:STM2042-MONOMER"/>
<dbReference type="BioCyc" id="SENT99287:STM2042-MONOMER"/>
<dbReference type="UniPathway" id="UPA00621"/>
<dbReference type="Proteomes" id="UP000001014">
    <property type="component" value="Chromosome"/>
</dbReference>
<dbReference type="GO" id="GO:0031472">
    <property type="term" value="C:propanediol degradation polyhedral organelle"/>
    <property type="evidence" value="ECO:0000314"/>
    <property type="project" value="UniProtKB"/>
</dbReference>
<dbReference type="GO" id="GO:0031419">
    <property type="term" value="F:cobalamin binding"/>
    <property type="evidence" value="ECO:0007669"/>
    <property type="project" value="UniProtKB-KW"/>
</dbReference>
<dbReference type="GO" id="GO:0050215">
    <property type="term" value="F:propanediol dehydratase activity"/>
    <property type="evidence" value="ECO:0007669"/>
    <property type="project" value="UniProtKB-EC"/>
</dbReference>
<dbReference type="GO" id="GO:0051144">
    <property type="term" value="P:propanediol catabolic process"/>
    <property type="evidence" value="ECO:0007669"/>
    <property type="project" value="UniProtKB-UniPathway"/>
</dbReference>
<dbReference type="Gene3D" id="1.10.1510.20">
    <property type="entry name" value="Propanediol/glycerol dehydratase, small subunit"/>
    <property type="match status" value="1"/>
</dbReference>
<dbReference type="InterPro" id="IPR003207">
    <property type="entry name" value="Ppandiol/glycerol_DeHydtase_su"/>
</dbReference>
<dbReference type="InterPro" id="IPR036091">
    <property type="entry name" value="Prodiol/glycerol_DeHase__sf_su"/>
</dbReference>
<dbReference type="NCBIfam" id="NF011971">
    <property type="entry name" value="PRK15443.1-2"/>
    <property type="match status" value="1"/>
</dbReference>
<dbReference type="NCBIfam" id="NF011972">
    <property type="entry name" value="PRK15443.1-3"/>
    <property type="match status" value="1"/>
</dbReference>
<dbReference type="Pfam" id="PF02287">
    <property type="entry name" value="Dehydratase_SU"/>
    <property type="match status" value="1"/>
</dbReference>
<dbReference type="PIRSF" id="PIRSF018505">
    <property type="entry name" value="Prpndl_dhdrts_sm"/>
    <property type="match status" value="1"/>
</dbReference>
<dbReference type="SUPFAM" id="SSF47148">
    <property type="entry name" value="Diol dehydratase, gamma subunit"/>
    <property type="match status" value="1"/>
</dbReference>
<feature type="chain" id="PRO_0000391460" description="Propanediol dehydratase small subunit">
    <location>
        <begin position="1"/>
        <end position="173"/>
    </location>
</feature>
<feature type="mutagenesis site" description="Enzyme associates with BMCs, 25% decrease in enzyme activity." evidence="7">
    <location>
        <begin position="2"/>
        <end position="35"/>
    </location>
</feature>
<gene>
    <name evidence="10" type="primary">pduE</name>
    <name type="ordered locus">STM2042</name>
</gene>
<keyword id="KW-1283">Bacterial microcompartment</keyword>
<keyword id="KW-0846">Cobalamin</keyword>
<keyword id="KW-0170">Cobalt</keyword>
<keyword id="KW-0903">Direct protein sequencing</keyword>
<keyword id="KW-0456">Lyase</keyword>
<keyword id="KW-1185">Reference proteome</keyword>
<proteinExistence type="evidence at protein level"/>